<dbReference type="EC" id="2.1.1.170" evidence="1"/>
<dbReference type="EMBL" id="CP000305">
    <property type="protein sequence ID" value="ABG20313.1"/>
    <property type="molecule type" value="Genomic_DNA"/>
</dbReference>
<dbReference type="EMBL" id="ACNQ01000019">
    <property type="protein sequence ID" value="EEO74912.1"/>
    <property type="molecule type" value="Genomic_DNA"/>
</dbReference>
<dbReference type="RefSeq" id="WP_002212261.1">
    <property type="nucleotide sequence ID" value="NZ_ACNQ01000019.1"/>
</dbReference>
<dbReference type="SMR" id="Q1CCG7"/>
<dbReference type="GeneID" id="57974595"/>
<dbReference type="KEGG" id="ypn:YPN_3986"/>
<dbReference type="HOGENOM" id="CLU_065341_2_2_6"/>
<dbReference type="Proteomes" id="UP000008936">
    <property type="component" value="Chromosome"/>
</dbReference>
<dbReference type="GO" id="GO:0005829">
    <property type="term" value="C:cytosol"/>
    <property type="evidence" value="ECO:0007669"/>
    <property type="project" value="TreeGrafter"/>
</dbReference>
<dbReference type="GO" id="GO:0070043">
    <property type="term" value="F:rRNA (guanine-N7-)-methyltransferase activity"/>
    <property type="evidence" value="ECO:0007669"/>
    <property type="project" value="UniProtKB-UniRule"/>
</dbReference>
<dbReference type="CDD" id="cd02440">
    <property type="entry name" value="AdoMet_MTases"/>
    <property type="match status" value="1"/>
</dbReference>
<dbReference type="FunFam" id="3.40.50.150:FF:000032">
    <property type="entry name" value="Ribosomal RNA small subunit methyltransferase G"/>
    <property type="match status" value="1"/>
</dbReference>
<dbReference type="Gene3D" id="3.40.50.150">
    <property type="entry name" value="Vaccinia Virus protein VP39"/>
    <property type="match status" value="1"/>
</dbReference>
<dbReference type="HAMAP" id="MF_00074">
    <property type="entry name" value="16SrRNA_methyltr_G"/>
    <property type="match status" value="1"/>
</dbReference>
<dbReference type="InterPro" id="IPR003682">
    <property type="entry name" value="rRNA_ssu_MeTfrase_G"/>
</dbReference>
<dbReference type="InterPro" id="IPR029063">
    <property type="entry name" value="SAM-dependent_MTases_sf"/>
</dbReference>
<dbReference type="NCBIfam" id="TIGR00138">
    <property type="entry name" value="rsmG_gidB"/>
    <property type="match status" value="1"/>
</dbReference>
<dbReference type="PANTHER" id="PTHR31760">
    <property type="entry name" value="S-ADENOSYL-L-METHIONINE-DEPENDENT METHYLTRANSFERASES SUPERFAMILY PROTEIN"/>
    <property type="match status" value="1"/>
</dbReference>
<dbReference type="PANTHER" id="PTHR31760:SF0">
    <property type="entry name" value="S-ADENOSYL-L-METHIONINE-DEPENDENT METHYLTRANSFERASES SUPERFAMILY PROTEIN"/>
    <property type="match status" value="1"/>
</dbReference>
<dbReference type="Pfam" id="PF02527">
    <property type="entry name" value="GidB"/>
    <property type="match status" value="1"/>
</dbReference>
<dbReference type="PIRSF" id="PIRSF003078">
    <property type="entry name" value="GidB"/>
    <property type="match status" value="1"/>
</dbReference>
<dbReference type="SUPFAM" id="SSF53335">
    <property type="entry name" value="S-adenosyl-L-methionine-dependent methyltransferases"/>
    <property type="match status" value="1"/>
</dbReference>
<evidence type="ECO:0000255" key="1">
    <source>
        <dbReference type="HAMAP-Rule" id="MF_00074"/>
    </source>
</evidence>
<sequence length="206" mass="23097">MLKKLDSLLTVAGITLPDQQKHQLIGYVELLDKWNKAYNLTSVRDPQQMLVRHILDSIVVNPHLQGSRFIDVGTGPGLPGIPLAIVRPDAHFTLLDSLGKRVRFLRQVQHELGLNNIEPVQSRVEAFTSEPPFDGVISRAFASLQDMLSWCHHLPAKPEGRFYALKGVRPDDELAVLPEDIVLESVIKLDVPELDGERHLIILKSN</sequence>
<reference key="1">
    <citation type="journal article" date="2006" name="J. Bacteriol.">
        <title>Complete genome sequence of Yersinia pestis strains Antiqua and Nepal516: evidence of gene reduction in an emerging pathogen.</title>
        <authorList>
            <person name="Chain P.S.G."/>
            <person name="Hu P."/>
            <person name="Malfatti S.A."/>
            <person name="Radnedge L."/>
            <person name="Larimer F."/>
            <person name="Vergez L.M."/>
            <person name="Worsham P."/>
            <person name="Chu M.C."/>
            <person name="Andersen G.L."/>
        </authorList>
    </citation>
    <scope>NUCLEOTIDE SEQUENCE [LARGE SCALE GENOMIC DNA]</scope>
    <source>
        <strain>Nepal516</strain>
    </source>
</reference>
<reference key="2">
    <citation type="submission" date="2009-04" db="EMBL/GenBank/DDBJ databases">
        <title>Yersinia pestis Nepal516A whole genome shotgun sequencing project.</title>
        <authorList>
            <person name="Plunkett G. III"/>
            <person name="Anderson B.D."/>
            <person name="Baumler D.J."/>
            <person name="Burland V."/>
            <person name="Cabot E.L."/>
            <person name="Glasner J.D."/>
            <person name="Mau B."/>
            <person name="Neeno-Eckwall E."/>
            <person name="Perna N.T."/>
            <person name="Munk A.C."/>
            <person name="Tapia R."/>
            <person name="Green L.D."/>
            <person name="Rogers Y.C."/>
            <person name="Detter J.C."/>
            <person name="Bruce D.C."/>
            <person name="Brettin T.S."/>
        </authorList>
    </citation>
    <scope>NUCLEOTIDE SEQUENCE [LARGE SCALE GENOMIC DNA]</scope>
    <source>
        <strain>Nepal516</strain>
    </source>
</reference>
<comment type="function">
    <text evidence="1">Specifically methylates the N7 position of guanine in position 527 of 16S rRNA.</text>
</comment>
<comment type="catalytic activity">
    <reaction evidence="1">
        <text>guanosine(527) in 16S rRNA + S-adenosyl-L-methionine = N(7)-methylguanosine(527) in 16S rRNA + S-adenosyl-L-homocysteine</text>
        <dbReference type="Rhea" id="RHEA:42732"/>
        <dbReference type="Rhea" id="RHEA-COMP:10209"/>
        <dbReference type="Rhea" id="RHEA-COMP:10210"/>
        <dbReference type="ChEBI" id="CHEBI:57856"/>
        <dbReference type="ChEBI" id="CHEBI:59789"/>
        <dbReference type="ChEBI" id="CHEBI:74269"/>
        <dbReference type="ChEBI" id="CHEBI:74480"/>
        <dbReference type="EC" id="2.1.1.170"/>
    </reaction>
</comment>
<comment type="subcellular location">
    <subcellularLocation>
        <location evidence="1">Cytoplasm</location>
    </subcellularLocation>
</comment>
<comment type="similarity">
    <text evidence="1">Belongs to the methyltransferase superfamily. RNA methyltransferase RsmG family.</text>
</comment>
<accession>Q1CCG7</accession>
<accession>D1Q309</accession>
<gene>
    <name evidence="1" type="primary">rsmG</name>
    <name type="ordered locus">YPN_3986</name>
    <name type="ORF">YP516_4522</name>
</gene>
<name>RSMG_YERPN</name>
<feature type="chain" id="PRO_1000010239" description="Ribosomal RNA small subunit methyltransferase G">
    <location>
        <begin position="1"/>
        <end position="206"/>
    </location>
</feature>
<feature type="binding site" evidence="1">
    <location>
        <position position="73"/>
    </location>
    <ligand>
        <name>S-adenosyl-L-methionine</name>
        <dbReference type="ChEBI" id="CHEBI:59789"/>
    </ligand>
</feature>
<feature type="binding site" evidence="1">
    <location>
        <position position="78"/>
    </location>
    <ligand>
        <name>S-adenosyl-L-methionine</name>
        <dbReference type="ChEBI" id="CHEBI:59789"/>
    </ligand>
</feature>
<feature type="binding site" evidence="1">
    <location>
        <begin position="124"/>
        <end position="125"/>
    </location>
    <ligand>
        <name>S-adenosyl-L-methionine</name>
        <dbReference type="ChEBI" id="CHEBI:59789"/>
    </ligand>
</feature>
<feature type="binding site" evidence="1">
    <location>
        <position position="139"/>
    </location>
    <ligand>
        <name>S-adenosyl-L-methionine</name>
        <dbReference type="ChEBI" id="CHEBI:59789"/>
    </ligand>
</feature>
<keyword id="KW-0963">Cytoplasm</keyword>
<keyword id="KW-0489">Methyltransferase</keyword>
<keyword id="KW-0698">rRNA processing</keyword>
<keyword id="KW-0949">S-adenosyl-L-methionine</keyword>
<keyword id="KW-0808">Transferase</keyword>
<proteinExistence type="inferred from homology"/>
<protein>
    <recommendedName>
        <fullName evidence="1">Ribosomal RNA small subunit methyltransferase G</fullName>
        <ecNumber evidence="1">2.1.1.170</ecNumber>
    </recommendedName>
    <alternativeName>
        <fullName evidence="1">16S rRNA 7-methylguanosine methyltransferase</fullName>
        <shortName evidence="1">16S rRNA m7G methyltransferase</shortName>
    </alternativeName>
</protein>
<organism>
    <name type="scientific">Yersinia pestis bv. Antiqua (strain Nepal516)</name>
    <dbReference type="NCBI Taxonomy" id="377628"/>
    <lineage>
        <taxon>Bacteria</taxon>
        <taxon>Pseudomonadati</taxon>
        <taxon>Pseudomonadota</taxon>
        <taxon>Gammaproteobacteria</taxon>
        <taxon>Enterobacterales</taxon>
        <taxon>Yersiniaceae</taxon>
        <taxon>Yersinia</taxon>
    </lineage>
</organism>